<reference key="1">
    <citation type="journal article" date="2007" name="PLoS Genet.">
        <title>Patterns and implications of gene gain and loss in the evolution of Prochlorococcus.</title>
        <authorList>
            <person name="Kettler G.C."/>
            <person name="Martiny A.C."/>
            <person name="Huang K."/>
            <person name="Zucker J."/>
            <person name="Coleman M.L."/>
            <person name="Rodrigue S."/>
            <person name="Chen F."/>
            <person name="Lapidus A."/>
            <person name="Ferriera S."/>
            <person name="Johnson J."/>
            <person name="Steglich C."/>
            <person name="Church G.M."/>
            <person name="Richardson P."/>
            <person name="Chisholm S.W."/>
        </authorList>
    </citation>
    <scope>NUCLEOTIDE SEQUENCE [LARGE SCALE GENOMIC DNA]</scope>
    <source>
        <strain>NATL2A</strain>
    </source>
</reference>
<organism>
    <name type="scientific">Prochlorococcus marinus (strain NATL2A)</name>
    <dbReference type="NCBI Taxonomy" id="59920"/>
    <lineage>
        <taxon>Bacteria</taxon>
        <taxon>Bacillati</taxon>
        <taxon>Cyanobacteriota</taxon>
        <taxon>Cyanophyceae</taxon>
        <taxon>Synechococcales</taxon>
        <taxon>Prochlorococcaceae</taxon>
        <taxon>Prochlorococcus</taxon>
    </lineage>
</organism>
<gene>
    <name evidence="1" type="primary">gcvT</name>
    <name type="ordered locus">PMN2A_1289</name>
</gene>
<evidence type="ECO:0000255" key="1">
    <source>
        <dbReference type="HAMAP-Rule" id="MF_00259"/>
    </source>
</evidence>
<protein>
    <recommendedName>
        <fullName evidence="1">Aminomethyltransferase</fullName>
        <ecNumber evidence="1">2.1.2.10</ecNumber>
    </recommendedName>
    <alternativeName>
        <fullName evidence="1">Glycine cleavage system T protein</fullName>
    </alternativeName>
</protein>
<sequence>MKLLQTPLYQECKELGGKMVPFANWEMPVSFSGLIEEHNAVRKNVGMFDISHMGVVQLKGKNIKSALQNLVPSDVFRIGPSEACYTVFLKENGGIQDDLIIYDQGVLDTNEESIVLVINAARKESDIEWLSSNLFKKEITISEFMPEGALIAIQGPESISTLEKILEEPLSNLPRFGHRTITSNPNLINSQESIFIARTGYTGEEGFEFLSSPETAKSIWKSLIASGVTPCGLGARDTLRLEASMHLYGNDINLDTTPFEAGLGWLVHLEMPNDFIGRKALEKQAEVGTQKKLVGIQVLDKGIARKGYPVLYNSETVGIVTSGTWSPTLQKPIALAYVPSEIAKVNTQIEVEIRRKKHPAIIVKRPFYRKGF</sequence>
<name>GCST_PROMT</name>
<proteinExistence type="inferred from homology"/>
<keyword id="KW-0032">Aminotransferase</keyword>
<keyword id="KW-1185">Reference proteome</keyword>
<keyword id="KW-0808">Transferase</keyword>
<feature type="chain" id="PRO_1000047691" description="Aminomethyltransferase">
    <location>
        <begin position="1"/>
        <end position="372"/>
    </location>
</feature>
<comment type="function">
    <text evidence="1">The glycine cleavage system catalyzes the degradation of glycine.</text>
</comment>
<comment type="catalytic activity">
    <reaction evidence="1">
        <text>N(6)-[(R)-S(8)-aminomethyldihydrolipoyl]-L-lysyl-[protein] + (6S)-5,6,7,8-tetrahydrofolate = N(6)-[(R)-dihydrolipoyl]-L-lysyl-[protein] + (6R)-5,10-methylene-5,6,7,8-tetrahydrofolate + NH4(+)</text>
        <dbReference type="Rhea" id="RHEA:16945"/>
        <dbReference type="Rhea" id="RHEA-COMP:10475"/>
        <dbReference type="Rhea" id="RHEA-COMP:10492"/>
        <dbReference type="ChEBI" id="CHEBI:15636"/>
        <dbReference type="ChEBI" id="CHEBI:28938"/>
        <dbReference type="ChEBI" id="CHEBI:57453"/>
        <dbReference type="ChEBI" id="CHEBI:83100"/>
        <dbReference type="ChEBI" id="CHEBI:83143"/>
        <dbReference type="EC" id="2.1.2.10"/>
    </reaction>
</comment>
<comment type="subunit">
    <text evidence="1">The glycine cleavage system is composed of four proteins: P, T, L and H.</text>
</comment>
<comment type="similarity">
    <text evidence="1">Belongs to the GcvT family.</text>
</comment>
<accession>Q46I99</accession>
<dbReference type="EC" id="2.1.2.10" evidence="1"/>
<dbReference type="EMBL" id="CP000095">
    <property type="protein sequence ID" value="AAZ58779.1"/>
    <property type="molecule type" value="Genomic_DNA"/>
</dbReference>
<dbReference type="RefSeq" id="WP_011295633.1">
    <property type="nucleotide sequence ID" value="NC_007335.2"/>
</dbReference>
<dbReference type="SMR" id="Q46I99"/>
<dbReference type="STRING" id="59920.PMN2A_1289"/>
<dbReference type="KEGG" id="pmn:PMN2A_1289"/>
<dbReference type="HOGENOM" id="CLU_007884_10_2_3"/>
<dbReference type="OrthoDB" id="9774591at2"/>
<dbReference type="PhylomeDB" id="Q46I99"/>
<dbReference type="Proteomes" id="UP000002535">
    <property type="component" value="Chromosome"/>
</dbReference>
<dbReference type="GO" id="GO:0005829">
    <property type="term" value="C:cytosol"/>
    <property type="evidence" value="ECO:0007669"/>
    <property type="project" value="TreeGrafter"/>
</dbReference>
<dbReference type="GO" id="GO:0005960">
    <property type="term" value="C:glycine cleavage complex"/>
    <property type="evidence" value="ECO:0007669"/>
    <property type="project" value="InterPro"/>
</dbReference>
<dbReference type="GO" id="GO:0004047">
    <property type="term" value="F:aminomethyltransferase activity"/>
    <property type="evidence" value="ECO:0007669"/>
    <property type="project" value="UniProtKB-UniRule"/>
</dbReference>
<dbReference type="GO" id="GO:0008483">
    <property type="term" value="F:transaminase activity"/>
    <property type="evidence" value="ECO:0007669"/>
    <property type="project" value="UniProtKB-KW"/>
</dbReference>
<dbReference type="GO" id="GO:0019464">
    <property type="term" value="P:glycine decarboxylation via glycine cleavage system"/>
    <property type="evidence" value="ECO:0007669"/>
    <property type="project" value="UniProtKB-UniRule"/>
</dbReference>
<dbReference type="FunFam" id="2.40.30.110:FF:000003">
    <property type="entry name" value="Aminomethyltransferase"/>
    <property type="match status" value="1"/>
</dbReference>
<dbReference type="FunFam" id="4.10.1250.10:FF:000001">
    <property type="entry name" value="Aminomethyltransferase"/>
    <property type="match status" value="1"/>
</dbReference>
<dbReference type="Gene3D" id="2.40.30.110">
    <property type="entry name" value="Aminomethyltransferase beta-barrel domains"/>
    <property type="match status" value="1"/>
</dbReference>
<dbReference type="Gene3D" id="3.30.70.1400">
    <property type="entry name" value="Aminomethyltransferase beta-barrel domains"/>
    <property type="match status" value="1"/>
</dbReference>
<dbReference type="Gene3D" id="4.10.1250.10">
    <property type="entry name" value="Aminomethyltransferase fragment"/>
    <property type="match status" value="1"/>
</dbReference>
<dbReference type="Gene3D" id="3.30.1360.120">
    <property type="entry name" value="Probable tRNA modification gtpase trme, domain 1"/>
    <property type="match status" value="1"/>
</dbReference>
<dbReference type="HAMAP" id="MF_00259">
    <property type="entry name" value="GcvT"/>
    <property type="match status" value="1"/>
</dbReference>
<dbReference type="InterPro" id="IPR006223">
    <property type="entry name" value="GCS_T"/>
</dbReference>
<dbReference type="InterPro" id="IPR022903">
    <property type="entry name" value="GCS_T_bac"/>
</dbReference>
<dbReference type="InterPro" id="IPR013977">
    <property type="entry name" value="GCST_C"/>
</dbReference>
<dbReference type="InterPro" id="IPR006222">
    <property type="entry name" value="GCV_T_N"/>
</dbReference>
<dbReference type="InterPro" id="IPR028896">
    <property type="entry name" value="GcvT/YgfZ/DmdA"/>
</dbReference>
<dbReference type="InterPro" id="IPR029043">
    <property type="entry name" value="GcvT/YgfZ_C"/>
</dbReference>
<dbReference type="InterPro" id="IPR027266">
    <property type="entry name" value="TrmE/GcvT_dom1"/>
</dbReference>
<dbReference type="NCBIfam" id="TIGR00528">
    <property type="entry name" value="gcvT"/>
    <property type="match status" value="1"/>
</dbReference>
<dbReference type="NCBIfam" id="NF001567">
    <property type="entry name" value="PRK00389.1"/>
    <property type="match status" value="1"/>
</dbReference>
<dbReference type="PANTHER" id="PTHR43757">
    <property type="entry name" value="AMINOMETHYLTRANSFERASE"/>
    <property type="match status" value="1"/>
</dbReference>
<dbReference type="PANTHER" id="PTHR43757:SF2">
    <property type="entry name" value="AMINOMETHYLTRANSFERASE, MITOCHONDRIAL"/>
    <property type="match status" value="1"/>
</dbReference>
<dbReference type="Pfam" id="PF01571">
    <property type="entry name" value="GCV_T"/>
    <property type="match status" value="1"/>
</dbReference>
<dbReference type="Pfam" id="PF08669">
    <property type="entry name" value="GCV_T_C"/>
    <property type="match status" value="1"/>
</dbReference>
<dbReference type="PIRSF" id="PIRSF006487">
    <property type="entry name" value="GcvT"/>
    <property type="match status" value="1"/>
</dbReference>
<dbReference type="SUPFAM" id="SSF101790">
    <property type="entry name" value="Aminomethyltransferase beta-barrel domain"/>
    <property type="match status" value="1"/>
</dbReference>
<dbReference type="SUPFAM" id="SSF103025">
    <property type="entry name" value="Folate-binding domain"/>
    <property type="match status" value="1"/>
</dbReference>